<evidence type="ECO:0000255" key="1">
    <source>
        <dbReference type="HAMAP-Rule" id="MF_03054"/>
    </source>
</evidence>
<evidence type="ECO:0000256" key="2">
    <source>
        <dbReference type="SAM" id="MobiDB-lite"/>
    </source>
</evidence>
<evidence type="ECO:0000305" key="3"/>
<name>CTU2B_XENLA</name>
<comment type="function">
    <text evidence="1">Plays a central role in 2-thiolation of mcm(5)S(2)U at tRNA wobble positions of tRNA(Lys), tRNA(Glu) and tRNA(Gln). May act by forming a heterodimer with ctu1/atpbd3 that ligates sulfur from thiocarboxylated urm1 onto the uridine of tRNAs at wobble position.</text>
</comment>
<comment type="pathway">
    <text evidence="1">tRNA modification; 5-methoxycarbonylmethyl-2-thiouridine-tRNA biosynthesis.</text>
</comment>
<comment type="subcellular location">
    <subcellularLocation>
        <location evidence="1">Cytoplasm</location>
    </subcellularLocation>
</comment>
<comment type="similarity">
    <text evidence="1">Belongs to the CTU2/NCS2 family.</text>
</comment>
<comment type="sequence caution" evidence="3">
    <conflict type="erroneous initiation">
        <sequence resource="EMBL-CDS" id="AAH70752"/>
    </conflict>
</comment>
<comment type="sequence caution" evidence="3">
    <conflict type="erroneous initiation">
        <sequence resource="EMBL-CDS" id="AAI08466"/>
    </conflict>
</comment>
<keyword id="KW-0963">Cytoplasm</keyword>
<keyword id="KW-1185">Reference proteome</keyword>
<keyword id="KW-0819">tRNA processing</keyword>
<dbReference type="EMBL" id="BC070752">
    <property type="protein sequence ID" value="AAH70752.1"/>
    <property type="status" value="ALT_INIT"/>
    <property type="molecule type" value="mRNA"/>
</dbReference>
<dbReference type="EMBL" id="BC108465">
    <property type="protein sequence ID" value="AAI08466.1"/>
    <property type="status" value="ALT_INIT"/>
    <property type="molecule type" value="mRNA"/>
</dbReference>
<dbReference type="OrthoDB" id="25129at2759"/>
<dbReference type="UniPathway" id="UPA00988"/>
<dbReference type="Proteomes" id="UP000186698">
    <property type="component" value="Unplaced"/>
</dbReference>
<dbReference type="GO" id="GO:0005829">
    <property type="term" value="C:cytosol"/>
    <property type="evidence" value="ECO:0000250"/>
    <property type="project" value="UniProtKB"/>
</dbReference>
<dbReference type="GO" id="GO:0016779">
    <property type="term" value="F:nucleotidyltransferase activity"/>
    <property type="evidence" value="ECO:0007669"/>
    <property type="project" value="UniProtKB-UniRule"/>
</dbReference>
<dbReference type="GO" id="GO:0016783">
    <property type="term" value="F:sulfurtransferase activity"/>
    <property type="evidence" value="ECO:0000318"/>
    <property type="project" value="GO_Central"/>
</dbReference>
<dbReference type="GO" id="GO:0000049">
    <property type="term" value="F:tRNA binding"/>
    <property type="evidence" value="ECO:0007669"/>
    <property type="project" value="InterPro"/>
</dbReference>
<dbReference type="GO" id="GO:0032447">
    <property type="term" value="P:protein urmylation"/>
    <property type="evidence" value="ECO:0007669"/>
    <property type="project" value="UniProtKB-UniRule"/>
</dbReference>
<dbReference type="GO" id="GO:0034227">
    <property type="term" value="P:tRNA thio-modification"/>
    <property type="evidence" value="ECO:0000250"/>
    <property type="project" value="UniProtKB"/>
</dbReference>
<dbReference type="GO" id="GO:0002143">
    <property type="term" value="P:tRNA wobble position uridine thiolation"/>
    <property type="evidence" value="ECO:0000318"/>
    <property type="project" value="GO_Central"/>
</dbReference>
<dbReference type="GO" id="GO:0002098">
    <property type="term" value="P:tRNA wobble uridine modification"/>
    <property type="evidence" value="ECO:0000250"/>
    <property type="project" value="UniProtKB"/>
</dbReference>
<dbReference type="Gene3D" id="3.40.50.620">
    <property type="entry name" value="HUPs"/>
    <property type="match status" value="1"/>
</dbReference>
<dbReference type="HAMAP" id="MF_03054">
    <property type="entry name" value="CTU2"/>
    <property type="match status" value="1"/>
</dbReference>
<dbReference type="InterPro" id="IPR019407">
    <property type="entry name" value="CTU2"/>
</dbReference>
<dbReference type="InterPro" id="IPR014729">
    <property type="entry name" value="Rossmann-like_a/b/a_fold"/>
</dbReference>
<dbReference type="PANTHER" id="PTHR20882">
    <property type="entry name" value="CYTOPLASMIC TRNA 2-THIOLATION PROTEIN 2"/>
    <property type="match status" value="1"/>
</dbReference>
<dbReference type="PANTHER" id="PTHR20882:SF14">
    <property type="entry name" value="CYTOPLASMIC TRNA 2-THIOLATION PROTEIN 2"/>
    <property type="match status" value="1"/>
</dbReference>
<dbReference type="Pfam" id="PF10288">
    <property type="entry name" value="CTU2"/>
    <property type="match status" value="1"/>
</dbReference>
<dbReference type="SUPFAM" id="SSF52402">
    <property type="entry name" value="Adenine nucleotide alpha hydrolases-like"/>
    <property type="match status" value="1"/>
</dbReference>
<feature type="chain" id="PRO_0000289179" description="Cytoplasmic tRNA 2-thiolation protein 2-B">
    <location>
        <begin position="1"/>
        <end position="512"/>
    </location>
</feature>
<feature type="region of interest" description="Disordered" evidence="2">
    <location>
        <begin position="196"/>
        <end position="215"/>
    </location>
</feature>
<feature type="compositionally biased region" description="Polar residues" evidence="2">
    <location>
        <begin position="199"/>
        <end position="214"/>
    </location>
</feature>
<feature type="sequence conflict" description="In Ref. 1; AAH70752." evidence="3" ref="1">
    <original>A</original>
    <variation>G</variation>
    <location>
        <position position="18"/>
    </location>
</feature>
<feature type="sequence conflict" description="In Ref. 1; AAH70752." evidence="3" ref="1">
    <original>A</original>
    <variation>P</variation>
    <location>
        <position position="442"/>
    </location>
</feature>
<proteinExistence type="evidence at transcript level"/>
<accession>Q32NV1</accession>
<accession>Q6NRJ8</accession>
<reference key="1">
    <citation type="submission" date="2005-11" db="EMBL/GenBank/DDBJ databases">
        <authorList>
            <consortium name="NIH - Xenopus Gene Collection (XGC) project"/>
        </authorList>
    </citation>
    <scope>NUCLEOTIDE SEQUENCE [LARGE SCALE MRNA]</scope>
    <source>
        <tissue>Embryo</tissue>
        <tissue>Oocyte</tissue>
    </source>
</reference>
<gene>
    <name type="primary">ctu2-b</name>
    <name type="synonym">ncs2-b</name>
</gene>
<sequence>MCEEGETYCPEVKDAKQAKSLGKICMKCKESSAALLIRAGDAFCKSCFKEYFVHKFRATLGKNRVIYPGEKVLLAYSGGPSSSAMVRQVQEGLSRDAPKKLRFVPGILFIDEGTACGMSWEERQQILSEICSVLQQTKIPFHIVSLEQVFSLPGSVLQRGAPEQRPNYKEEVDRFLVQEREQGDAGCSEMLERLEVTDSDSPGSSDKMYQSTCSRPPDMHTQKLKQLFASAKTLTAKQQLLHTLRSHLILHIARTCGYSKVMTGESCTRLSIRLLSNVSLGRGAFLPLDTGFCDSRYGDVDIIRPMREYSSKEIAYYNRFFNVLPIFIPALDTKASENSSIQHLTEVFVNRLQADFPSTVSTLYRTSEKLNVSIIDADQETCAKDRCLLCLSPLDTQAGKASAFSATQLSHHLSQKIPMKSNDLANNSDKSCCQGGQGCKEAGYGDTCQSRALQTPSFVHMLCYSCRLTVKDMQSLDVLPQYVLHEAEYRCHRTEMRKEIQEFLLEEDDGDS</sequence>
<protein>
    <recommendedName>
        <fullName evidence="1">Cytoplasmic tRNA 2-thiolation protein 2-B</fullName>
    </recommendedName>
</protein>
<organism>
    <name type="scientific">Xenopus laevis</name>
    <name type="common">African clawed frog</name>
    <dbReference type="NCBI Taxonomy" id="8355"/>
    <lineage>
        <taxon>Eukaryota</taxon>
        <taxon>Metazoa</taxon>
        <taxon>Chordata</taxon>
        <taxon>Craniata</taxon>
        <taxon>Vertebrata</taxon>
        <taxon>Euteleostomi</taxon>
        <taxon>Amphibia</taxon>
        <taxon>Batrachia</taxon>
        <taxon>Anura</taxon>
        <taxon>Pipoidea</taxon>
        <taxon>Pipidae</taxon>
        <taxon>Xenopodinae</taxon>
        <taxon>Xenopus</taxon>
        <taxon>Xenopus</taxon>
    </lineage>
</organism>